<keyword id="KW-0067">ATP-binding</keyword>
<keyword id="KW-0173">Coenzyme A biosynthesis</keyword>
<keyword id="KW-0963">Cytoplasm</keyword>
<keyword id="KW-0460">Magnesium</keyword>
<keyword id="KW-0547">Nucleotide-binding</keyword>
<keyword id="KW-0548">Nucleotidyltransferase</keyword>
<keyword id="KW-1185">Reference proteome</keyword>
<keyword id="KW-0808">Transferase</keyword>
<organism>
    <name type="scientific">Frankia casuarinae (strain DSM 45818 / CECT 9043 / HFP020203 / CcI3)</name>
    <dbReference type="NCBI Taxonomy" id="106370"/>
    <lineage>
        <taxon>Bacteria</taxon>
        <taxon>Bacillati</taxon>
        <taxon>Actinomycetota</taxon>
        <taxon>Actinomycetes</taxon>
        <taxon>Frankiales</taxon>
        <taxon>Frankiaceae</taxon>
        <taxon>Frankia</taxon>
    </lineage>
</organism>
<feature type="chain" id="PRO_1000011143" description="Phosphopantetheine adenylyltransferase">
    <location>
        <begin position="1"/>
        <end position="162"/>
    </location>
</feature>
<feature type="binding site" evidence="1">
    <location>
        <begin position="9"/>
        <end position="10"/>
    </location>
    <ligand>
        <name>ATP</name>
        <dbReference type="ChEBI" id="CHEBI:30616"/>
    </ligand>
</feature>
<feature type="binding site" evidence="1">
    <location>
        <position position="9"/>
    </location>
    <ligand>
        <name>substrate</name>
    </ligand>
</feature>
<feature type="binding site" evidence="1">
    <location>
        <position position="17"/>
    </location>
    <ligand>
        <name>ATP</name>
        <dbReference type="ChEBI" id="CHEBI:30616"/>
    </ligand>
</feature>
<feature type="binding site" evidence="1">
    <location>
        <position position="41"/>
    </location>
    <ligand>
        <name>substrate</name>
    </ligand>
</feature>
<feature type="binding site" evidence="1">
    <location>
        <position position="77"/>
    </location>
    <ligand>
        <name>substrate</name>
    </ligand>
</feature>
<feature type="binding site" evidence="1">
    <location>
        <position position="91"/>
    </location>
    <ligand>
        <name>substrate</name>
    </ligand>
</feature>
<feature type="binding site" evidence="1">
    <location>
        <begin position="92"/>
        <end position="94"/>
    </location>
    <ligand>
        <name>ATP</name>
        <dbReference type="ChEBI" id="CHEBI:30616"/>
    </ligand>
</feature>
<feature type="binding site" evidence="1">
    <location>
        <position position="102"/>
    </location>
    <ligand>
        <name>ATP</name>
        <dbReference type="ChEBI" id="CHEBI:30616"/>
    </ligand>
</feature>
<feature type="binding site" evidence="1">
    <location>
        <begin position="126"/>
        <end position="132"/>
    </location>
    <ligand>
        <name>ATP</name>
        <dbReference type="ChEBI" id="CHEBI:30616"/>
    </ligand>
</feature>
<feature type="site" description="Transition state stabilizer" evidence="1">
    <location>
        <position position="17"/>
    </location>
</feature>
<comment type="function">
    <text evidence="1">Reversibly transfers an adenylyl group from ATP to 4'-phosphopantetheine, yielding dephospho-CoA (dPCoA) and pyrophosphate.</text>
</comment>
<comment type="catalytic activity">
    <reaction evidence="1">
        <text>(R)-4'-phosphopantetheine + ATP + H(+) = 3'-dephospho-CoA + diphosphate</text>
        <dbReference type="Rhea" id="RHEA:19801"/>
        <dbReference type="ChEBI" id="CHEBI:15378"/>
        <dbReference type="ChEBI" id="CHEBI:30616"/>
        <dbReference type="ChEBI" id="CHEBI:33019"/>
        <dbReference type="ChEBI" id="CHEBI:57328"/>
        <dbReference type="ChEBI" id="CHEBI:61723"/>
        <dbReference type="EC" id="2.7.7.3"/>
    </reaction>
</comment>
<comment type="cofactor">
    <cofactor evidence="1">
        <name>Mg(2+)</name>
        <dbReference type="ChEBI" id="CHEBI:18420"/>
    </cofactor>
</comment>
<comment type="pathway">
    <text evidence="1">Cofactor biosynthesis; coenzyme A biosynthesis; CoA from (R)-pantothenate: step 4/5.</text>
</comment>
<comment type="subunit">
    <text evidence="1">Homohexamer.</text>
</comment>
<comment type="subcellular location">
    <subcellularLocation>
        <location evidence="1">Cytoplasm</location>
    </subcellularLocation>
</comment>
<comment type="similarity">
    <text evidence="1">Belongs to the bacterial CoaD family.</text>
</comment>
<accession>Q2J6Y5</accession>
<name>COAD_FRACC</name>
<evidence type="ECO:0000255" key="1">
    <source>
        <dbReference type="HAMAP-Rule" id="MF_00151"/>
    </source>
</evidence>
<gene>
    <name evidence="1" type="primary">coaD</name>
    <name type="ordered locus">Francci3_3605</name>
</gene>
<sequence>MRRAACPGSFDPITNGHLDIIVRASRLFDEVVVAVSINKNKVTLFTVDERMELIREALRDHPMAPSNVLVDASHGLIVDFCRSRGIQSIVKGLRAVSDFDYELQMAQMNNSLAGVETLFMSTNPQYAFLSSSLVKEVARYGGDVSGLVPDVVLKQLRERLAQ</sequence>
<dbReference type="EC" id="2.7.7.3" evidence="1"/>
<dbReference type="EMBL" id="CP000249">
    <property type="protein sequence ID" value="ABD12957.1"/>
    <property type="molecule type" value="Genomic_DNA"/>
</dbReference>
<dbReference type="RefSeq" id="WP_011437981.1">
    <property type="nucleotide sequence ID" value="NZ_JENI01000005.1"/>
</dbReference>
<dbReference type="SMR" id="Q2J6Y5"/>
<dbReference type="STRING" id="106370.Francci3_3605"/>
<dbReference type="KEGG" id="fra:Francci3_3605"/>
<dbReference type="eggNOG" id="COG0669">
    <property type="taxonomic scope" value="Bacteria"/>
</dbReference>
<dbReference type="HOGENOM" id="CLU_100149_1_0_11"/>
<dbReference type="OrthoDB" id="9806661at2"/>
<dbReference type="PhylomeDB" id="Q2J6Y5"/>
<dbReference type="UniPathway" id="UPA00241">
    <property type="reaction ID" value="UER00355"/>
</dbReference>
<dbReference type="Proteomes" id="UP000001937">
    <property type="component" value="Chromosome"/>
</dbReference>
<dbReference type="GO" id="GO:0005737">
    <property type="term" value="C:cytoplasm"/>
    <property type="evidence" value="ECO:0007669"/>
    <property type="project" value="UniProtKB-SubCell"/>
</dbReference>
<dbReference type="GO" id="GO:0005524">
    <property type="term" value="F:ATP binding"/>
    <property type="evidence" value="ECO:0007669"/>
    <property type="project" value="UniProtKB-KW"/>
</dbReference>
<dbReference type="GO" id="GO:0004595">
    <property type="term" value="F:pantetheine-phosphate adenylyltransferase activity"/>
    <property type="evidence" value="ECO:0007669"/>
    <property type="project" value="UniProtKB-UniRule"/>
</dbReference>
<dbReference type="GO" id="GO:0015937">
    <property type="term" value="P:coenzyme A biosynthetic process"/>
    <property type="evidence" value="ECO:0007669"/>
    <property type="project" value="UniProtKB-UniRule"/>
</dbReference>
<dbReference type="CDD" id="cd02163">
    <property type="entry name" value="PPAT"/>
    <property type="match status" value="1"/>
</dbReference>
<dbReference type="Gene3D" id="3.40.50.620">
    <property type="entry name" value="HUPs"/>
    <property type="match status" value="1"/>
</dbReference>
<dbReference type="HAMAP" id="MF_00151">
    <property type="entry name" value="PPAT_bact"/>
    <property type="match status" value="1"/>
</dbReference>
<dbReference type="InterPro" id="IPR004821">
    <property type="entry name" value="Cyt_trans-like"/>
</dbReference>
<dbReference type="InterPro" id="IPR001980">
    <property type="entry name" value="PPAT"/>
</dbReference>
<dbReference type="InterPro" id="IPR014729">
    <property type="entry name" value="Rossmann-like_a/b/a_fold"/>
</dbReference>
<dbReference type="NCBIfam" id="TIGR01510">
    <property type="entry name" value="coaD_prev_kdtB"/>
    <property type="match status" value="1"/>
</dbReference>
<dbReference type="NCBIfam" id="TIGR00125">
    <property type="entry name" value="cyt_tran_rel"/>
    <property type="match status" value="1"/>
</dbReference>
<dbReference type="PANTHER" id="PTHR21342">
    <property type="entry name" value="PHOSPHOPANTETHEINE ADENYLYLTRANSFERASE"/>
    <property type="match status" value="1"/>
</dbReference>
<dbReference type="PANTHER" id="PTHR21342:SF1">
    <property type="entry name" value="PHOSPHOPANTETHEINE ADENYLYLTRANSFERASE"/>
    <property type="match status" value="1"/>
</dbReference>
<dbReference type="Pfam" id="PF01467">
    <property type="entry name" value="CTP_transf_like"/>
    <property type="match status" value="1"/>
</dbReference>
<dbReference type="PRINTS" id="PR01020">
    <property type="entry name" value="LPSBIOSNTHSS"/>
</dbReference>
<dbReference type="SUPFAM" id="SSF52374">
    <property type="entry name" value="Nucleotidylyl transferase"/>
    <property type="match status" value="1"/>
</dbReference>
<reference key="1">
    <citation type="journal article" date="2007" name="Genome Res.">
        <title>Genome characteristics of facultatively symbiotic Frankia sp. strains reflect host range and host plant biogeography.</title>
        <authorList>
            <person name="Normand P."/>
            <person name="Lapierre P."/>
            <person name="Tisa L.S."/>
            <person name="Gogarten J.P."/>
            <person name="Alloisio N."/>
            <person name="Bagnarol E."/>
            <person name="Bassi C.A."/>
            <person name="Berry A.M."/>
            <person name="Bickhart D.M."/>
            <person name="Choisne N."/>
            <person name="Couloux A."/>
            <person name="Cournoyer B."/>
            <person name="Cruveiller S."/>
            <person name="Daubin V."/>
            <person name="Demange N."/>
            <person name="Francino M.P."/>
            <person name="Goltsman E."/>
            <person name="Huang Y."/>
            <person name="Kopp O.R."/>
            <person name="Labarre L."/>
            <person name="Lapidus A."/>
            <person name="Lavire C."/>
            <person name="Marechal J."/>
            <person name="Martinez M."/>
            <person name="Mastronunzio J.E."/>
            <person name="Mullin B.C."/>
            <person name="Niemann J."/>
            <person name="Pujic P."/>
            <person name="Rawnsley T."/>
            <person name="Rouy Z."/>
            <person name="Schenowitz C."/>
            <person name="Sellstedt A."/>
            <person name="Tavares F."/>
            <person name="Tomkins J.P."/>
            <person name="Vallenet D."/>
            <person name="Valverde C."/>
            <person name="Wall L.G."/>
            <person name="Wang Y."/>
            <person name="Medigue C."/>
            <person name="Benson D.R."/>
        </authorList>
    </citation>
    <scope>NUCLEOTIDE SEQUENCE [LARGE SCALE GENOMIC DNA]</scope>
    <source>
        <strain>DSM 45818 / CECT 9043 / HFP020203 / CcI3</strain>
    </source>
</reference>
<protein>
    <recommendedName>
        <fullName evidence="1">Phosphopantetheine adenylyltransferase</fullName>
        <ecNumber evidence="1">2.7.7.3</ecNumber>
    </recommendedName>
    <alternativeName>
        <fullName evidence="1">Dephospho-CoA pyrophosphorylase</fullName>
    </alternativeName>
    <alternativeName>
        <fullName evidence="1">Pantetheine-phosphate adenylyltransferase</fullName>
        <shortName evidence="1">PPAT</shortName>
    </alternativeName>
</protein>
<proteinExistence type="inferred from homology"/>